<comment type="similarity">
    <text evidence="1">Belongs to the UPF0231 family.</text>
</comment>
<evidence type="ECO:0000255" key="1">
    <source>
        <dbReference type="HAMAP-Rule" id="MF_01053"/>
    </source>
</evidence>
<accession>Q6D0M1</accession>
<dbReference type="EMBL" id="BX950851">
    <property type="protein sequence ID" value="CAG76676.1"/>
    <property type="molecule type" value="Genomic_DNA"/>
</dbReference>
<dbReference type="STRING" id="218491.ECA3777"/>
<dbReference type="KEGG" id="eca:ECA3777"/>
<dbReference type="PATRIC" id="fig|218491.5.peg.3832"/>
<dbReference type="eggNOG" id="COG3112">
    <property type="taxonomic scope" value="Bacteria"/>
</dbReference>
<dbReference type="HOGENOM" id="CLU_139226_0_0_6"/>
<dbReference type="OrthoDB" id="5739292at2"/>
<dbReference type="Proteomes" id="UP000007966">
    <property type="component" value="Chromosome"/>
</dbReference>
<dbReference type="HAMAP" id="MF_01053">
    <property type="entry name" value="UPF0231"/>
    <property type="match status" value="1"/>
</dbReference>
<dbReference type="InterPro" id="IPR008249">
    <property type="entry name" value="UPF0231"/>
</dbReference>
<dbReference type="NCBIfam" id="NF003574">
    <property type="entry name" value="PRK05248.1-1"/>
    <property type="match status" value="1"/>
</dbReference>
<dbReference type="NCBIfam" id="NF003576">
    <property type="entry name" value="PRK05248.1-3"/>
    <property type="match status" value="1"/>
</dbReference>
<dbReference type="Pfam" id="PF06062">
    <property type="entry name" value="UPF0231"/>
    <property type="match status" value="1"/>
</dbReference>
<dbReference type="PIRSF" id="PIRSF006287">
    <property type="entry name" value="UCP006287"/>
    <property type="match status" value="1"/>
</dbReference>
<name>Y3777_PECAS</name>
<gene>
    <name type="ordered locus">ECA3777</name>
</gene>
<keyword id="KW-1185">Reference proteome</keyword>
<reference key="1">
    <citation type="journal article" date="2004" name="Proc. Natl. Acad. Sci. U.S.A.">
        <title>Genome sequence of the enterobacterial phytopathogen Erwinia carotovora subsp. atroseptica and characterization of virulence factors.</title>
        <authorList>
            <person name="Bell K.S."/>
            <person name="Sebaihia M."/>
            <person name="Pritchard L."/>
            <person name="Holden M.T.G."/>
            <person name="Hyman L.J."/>
            <person name="Holeva M.C."/>
            <person name="Thomson N.R."/>
            <person name="Bentley S.D."/>
            <person name="Churcher L.J.C."/>
            <person name="Mungall K."/>
            <person name="Atkin R."/>
            <person name="Bason N."/>
            <person name="Brooks K."/>
            <person name="Chillingworth T."/>
            <person name="Clark K."/>
            <person name="Doggett J."/>
            <person name="Fraser A."/>
            <person name="Hance Z."/>
            <person name="Hauser H."/>
            <person name="Jagels K."/>
            <person name="Moule S."/>
            <person name="Norbertczak H."/>
            <person name="Ormond D."/>
            <person name="Price C."/>
            <person name="Quail M.A."/>
            <person name="Sanders M."/>
            <person name="Walker D."/>
            <person name="Whitehead S."/>
            <person name="Salmond G.P.C."/>
            <person name="Birch P.R.J."/>
            <person name="Parkhill J."/>
            <person name="Toth I.K."/>
        </authorList>
    </citation>
    <scope>NUCLEOTIDE SEQUENCE [LARGE SCALE GENOMIC DNA]</scope>
    <source>
        <strain>SCRI 1043 / ATCC BAA-672</strain>
    </source>
</reference>
<proteinExistence type="inferred from homology"/>
<feature type="chain" id="PRO_1000064362" description="UPF0231 protein ECA3777">
    <location>
        <begin position="1"/>
        <end position="119"/>
    </location>
</feature>
<sequence length="119" mass="13828">MDYEFLRDVTGQVIVRMSMGHEAIGHWFNEEVKGQLTVLTDVEDGARSVAGSERQWRRVGHEYTLLLDEEEVMVQANQLSFTTDELEEGMSYYDEESLSLCGLDDFLTLVEKYREFILH</sequence>
<organism>
    <name type="scientific">Pectobacterium atrosepticum (strain SCRI 1043 / ATCC BAA-672)</name>
    <name type="common">Erwinia carotovora subsp. atroseptica</name>
    <dbReference type="NCBI Taxonomy" id="218491"/>
    <lineage>
        <taxon>Bacteria</taxon>
        <taxon>Pseudomonadati</taxon>
        <taxon>Pseudomonadota</taxon>
        <taxon>Gammaproteobacteria</taxon>
        <taxon>Enterobacterales</taxon>
        <taxon>Pectobacteriaceae</taxon>
        <taxon>Pectobacterium</taxon>
    </lineage>
</organism>
<protein>
    <recommendedName>
        <fullName evidence="1">UPF0231 protein ECA3777</fullName>
    </recommendedName>
</protein>